<feature type="signal peptide" evidence="6">
    <location>
        <begin position="1"/>
        <end position="20"/>
    </location>
</feature>
<feature type="chain" id="PRO_0000011539" description="Glutamate receptor 4">
    <location>
        <begin position="21"/>
        <end position="902"/>
    </location>
</feature>
<feature type="topological domain" description="Extracellular" evidence="1">
    <location>
        <begin position="22"/>
        <end position="544"/>
    </location>
</feature>
<feature type="transmembrane region" description="Helical" evidence="1">
    <location>
        <begin position="545"/>
        <end position="565"/>
    </location>
</feature>
<feature type="topological domain" description="Cytoplasmic" evidence="1">
    <location>
        <begin position="566"/>
        <end position="592"/>
    </location>
</feature>
<feature type="intramembrane region" description="Helical; Pore-forming" evidence="1">
    <location>
        <begin position="593"/>
        <end position="608"/>
    </location>
</feature>
<feature type="intramembrane region" evidence="1">
    <location>
        <begin position="609"/>
        <end position="611"/>
    </location>
</feature>
<feature type="topological domain" description="Cytoplasmic" evidence="1">
    <location>
        <begin position="612"/>
        <end position="617"/>
    </location>
</feature>
<feature type="transmembrane region" description="Helical" evidence="1">
    <location>
        <begin position="618"/>
        <end position="638"/>
    </location>
</feature>
<feature type="topological domain" description="Extracellular" evidence="1">
    <location>
        <begin position="639"/>
        <end position="813"/>
    </location>
</feature>
<feature type="transmembrane region" description="Helical; Name=M4" evidence="1">
    <location>
        <begin position="814"/>
        <end position="834"/>
    </location>
</feature>
<feature type="topological domain" description="Cytoplasmic" evidence="1">
    <location>
        <begin position="835"/>
        <end position="902"/>
    </location>
</feature>
<feature type="binding site" evidence="2">
    <location>
        <position position="500"/>
    </location>
    <ligand>
        <name>L-glutamate</name>
        <dbReference type="ChEBI" id="CHEBI:29985"/>
    </ligand>
</feature>
<feature type="binding site" evidence="2">
    <location>
        <position position="502"/>
    </location>
    <ligand>
        <name>L-glutamate</name>
        <dbReference type="ChEBI" id="CHEBI:29985"/>
    </ligand>
</feature>
<feature type="binding site" evidence="2">
    <location>
        <position position="507"/>
    </location>
    <ligand>
        <name>L-glutamate</name>
        <dbReference type="ChEBI" id="CHEBI:29985"/>
    </ligand>
</feature>
<feature type="binding site" evidence="2">
    <location>
        <position position="676"/>
    </location>
    <ligand>
        <name>L-glutamate</name>
        <dbReference type="ChEBI" id="CHEBI:29985"/>
    </ligand>
</feature>
<feature type="binding site" evidence="2">
    <location>
        <position position="677"/>
    </location>
    <ligand>
        <name>L-glutamate</name>
        <dbReference type="ChEBI" id="CHEBI:29985"/>
    </ligand>
</feature>
<feature type="binding site" evidence="2">
    <location>
        <position position="727"/>
    </location>
    <ligand>
        <name>L-glutamate</name>
        <dbReference type="ChEBI" id="CHEBI:29985"/>
    </ligand>
</feature>
<feature type="modified residue" description="Phosphoserine" evidence="11">
    <location>
        <position position="862"/>
    </location>
</feature>
<feature type="lipid moiety-binding region" description="S-palmitoyl cysteine" evidence="4">
    <location>
        <position position="611"/>
    </location>
</feature>
<feature type="lipid moiety-binding region" description="S-palmitoyl cysteine" evidence="7">
    <location>
        <position position="837"/>
    </location>
</feature>
<feature type="glycosylation site" description="N-linked (GlcNAc...) asparagine" evidence="6">
    <location>
        <position position="52"/>
    </location>
</feature>
<feature type="glycosylation site" description="N-linked (GlcNAc...) asparagine" evidence="6">
    <location>
        <position position="56"/>
    </location>
</feature>
<feature type="glycosylation site" description="N-linked (GlcNAc...) asparagine" evidence="6">
    <location>
        <position position="258"/>
    </location>
</feature>
<feature type="glycosylation site" description="N-linked (GlcNAc...) asparagine" evidence="6">
    <location>
        <position position="371"/>
    </location>
</feature>
<feature type="glycosylation site" description="N-linked (GlcNAc...) asparagine" evidence="6">
    <location>
        <position position="407"/>
    </location>
</feature>
<feature type="glycosylation site" description="N-linked (GlcNAc...) asparagine" evidence="6">
    <location>
        <position position="414"/>
    </location>
</feature>
<feature type="disulfide bond" evidence="1">
    <location>
        <begin position="84"/>
        <end position="331"/>
    </location>
</feature>
<feature type="disulfide bond" evidence="1">
    <location>
        <begin position="740"/>
        <end position="795"/>
    </location>
</feature>
<feature type="sequence conflict" description="In Ref. 1; BAA74538." evidence="9" ref="1">
    <original>F</original>
    <variation>G</variation>
    <location>
        <position position="630"/>
    </location>
</feature>
<feature type="sequence conflict" description="In Ref. 1; BAA74538." evidence="9" ref="1">
    <original>RTP</original>
    <variation>GNA</variation>
    <location>
        <begin position="765"/>
        <end position="767"/>
    </location>
</feature>
<feature type="sequence conflict" description="In Ref. 1; BAA74538." evidence="9" ref="1">
    <original>SEAGV</original>
    <variation>NEQGL</variation>
    <location>
        <begin position="776"/>
        <end position="780"/>
    </location>
</feature>
<feature type="sequence conflict" description="In Ref. 1; BAA74538." evidence="9" ref="1">
    <original>PKDSG</original>
    <variation>SGGGD</variation>
    <location>
        <begin position="797"/>
        <end position="801"/>
    </location>
</feature>
<dbReference type="EMBL" id="AB022913">
    <property type="protein sequence ID" value="BAA74538.1"/>
    <property type="molecule type" value="mRNA"/>
</dbReference>
<dbReference type="EMBL" id="AB079073">
    <property type="protein sequence ID" value="BAE06154.1"/>
    <property type="molecule type" value="mRNA"/>
</dbReference>
<dbReference type="EMBL" id="BC060697">
    <property type="protein sequence ID" value="AAH60697.1"/>
    <property type="molecule type" value="mRNA"/>
</dbReference>
<dbReference type="CCDS" id="CCDS22797.1"/>
<dbReference type="RefSeq" id="NP_001106651.1">
    <property type="nucleotide sequence ID" value="NM_001113180.1"/>
</dbReference>
<dbReference type="RefSeq" id="NP_001106652.1">
    <property type="nucleotide sequence ID" value="NM_001113181.1"/>
</dbReference>
<dbReference type="RefSeq" id="NP_062665.3">
    <property type="nucleotide sequence ID" value="NM_019691.4"/>
</dbReference>
<dbReference type="SMR" id="Q9Z2W8"/>
<dbReference type="BioGRID" id="200060">
    <property type="interactions" value="10"/>
</dbReference>
<dbReference type="FunCoup" id="Q9Z2W8">
    <property type="interactions" value="833"/>
</dbReference>
<dbReference type="IntAct" id="Q9Z2W8">
    <property type="interactions" value="3"/>
</dbReference>
<dbReference type="MINT" id="Q9Z2W8"/>
<dbReference type="STRING" id="10090.ENSMUSP00000027020"/>
<dbReference type="ChEMBL" id="CHEMBL2096617"/>
<dbReference type="GlyConnect" id="2344">
    <property type="glycosylation" value="5 N-Linked glycans (3 sites)"/>
</dbReference>
<dbReference type="GlyCosmos" id="Q9Z2W8">
    <property type="glycosylation" value="6 sites, 5 glycans"/>
</dbReference>
<dbReference type="GlyGen" id="Q9Z2W8">
    <property type="glycosylation" value="7 sites, 10 N-linked glycans (5 sites), 1 O-linked glycan (1 site)"/>
</dbReference>
<dbReference type="iPTMnet" id="Q9Z2W8"/>
<dbReference type="PhosphoSitePlus" id="Q9Z2W8"/>
<dbReference type="SwissPalm" id="Q9Z2W8"/>
<dbReference type="PaxDb" id="10090-ENSMUSP00000027020"/>
<dbReference type="PeptideAtlas" id="Q9Z2W8"/>
<dbReference type="ProteomicsDB" id="271163"/>
<dbReference type="ABCD" id="Q9Z2W8">
    <property type="antibodies" value="12 sequenced antibodies"/>
</dbReference>
<dbReference type="Antibodypedia" id="31872">
    <property type="antibodies" value="453 antibodies from 37 providers"/>
</dbReference>
<dbReference type="DNASU" id="14802"/>
<dbReference type="Ensembl" id="ENSMUST00000063508.15">
    <property type="protein sequence ID" value="ENSMUSP00000066980.8"/>
    <property type="gene ID" value="ENSMUSG00000025892.17"/>
</dbReference>
<dbReference type="GeneID" id="14802"/>
<dbReference type="KEGG" id="mmu:14802"/>
<dbReference type="UCSC" id="uc009obp.2">
    <property type="organism name" value="mouse"/>
</dbReference>
<dbReference type="AGR" id="MGI:95811"/>
<dbReference type="CTD" id="2893"/>
<dbReference type="MGI" id="MGI:95811">
    <property type="gene designation" value="Gria4"/>
</dbReference>
<dbReference type="VEuPathDB" id="HostDB:ENSMUSG00000025892"/>
<dbReference type="eggNOG" id="KOG1054">
    <property type="taxonomic scope" value="Eukaryota"/>
</dbReference>
<dbReference type="GeneTree" id="ENSGT00940000155677"/>
<dbReference type="InParanoid" id="Q9Z2W8"/>
<dbReference type="OrthoDB" id="5984008at2759"/>
<dbReference type="Reactome" id="R-MMU-399710">
    <property type="pathway name" value="Activation of AMPA receptors"/>
</dbReference>
<dbReference type="Reactome" id="R-MMU-399719">
    <property type="pathway name" value="Trafficking of AMPA receptors"/>
</dbReference>
<dbReference type="Reactome" id="R-MMU-416993">
    <property type="pathway name" value="Trafficking of GluR2-containing AMPA receptors"/>
</dbReference>
<dbReference type="Reactome" id="R-MMU-438066">
    <property type="pathway name" value="Unblocking of NMDA receptors, glutamate binding and activation"/>
</dbReference>
<dbReference type="Reactome" id="R-MMU-8849932">
    <property type="pathway name" value="Synaptic adhesion-like molecules"/>
</dbReference>
<dbReference type="BioGRID-ORCS" id="14802">
    <property type="hits" value="3 hits in 78 CRISPR screens"/>
</dbReference>
<dbReference type="CD-CODE" id="CE726F99">
    <property type="entry name" value="Postsynaptic density"/>
</dbReference>
<dbReference type="ChiTaRS" id="Gria4">
    <property type="organism name" value="mouse"/>
</dbReference>
<dbReference type="PRO" id="PR:Q9Z2W8"/>
<dbReference type="Proteomes" id="UP000000589">
    <property type="component" value="Chromosome 9"/>
</dbReference>
<dbReference type="RNAct" id="Q9Z2W8">
    <property type="molecule type" value="protein"/>
</dbReference>
<dbReference type="Bgee" id="ENSMUSG00000025892">
    <property type="expression patterns" value="Expressed in cerebellum lobe and 163 other cell types or tissues"/>
</dbReference>
<dbReference type="ExpressionAtlas" id="Q9Z2W8">
    <property type="expression patterns" value="baseline and differential"/>
</dbReference>
<dbReference type="GO" id="GO:0032281">
    <property type="term" value="C:AMPA glutamate receptor complex"/>
    <property type="evidence" value="ECO:0000314"/>
    <property type="project" value="MGI"/>
</dbReference>
<dbReference type="GO" id="GO:0030425">
    <property type="term" value="C:dendrite"/>
    <property type="evidence" value="ECO:0000250"/>
    <property type="project" value="UniProtKB"/>
</dbReference>
<dbReference type="GO" id="GO:0098978">
    <property type="term" value="C:glutamatergic synapse"/>
    <property type="evidence" value="ECO:0000314"/>
    <property type="project" value="SynGO"/>
</dbReference>
<dbReference type="GO" id="GO:0032983">
    <property type="term" value="C:kainate selective glutamate receptor complex"/>
    <property type="evidence" value="ECO:0000250"/>
    <property type="project" value="UniProtKB"/>
</dbReference>
<dbReference type="GO" id="GO:0045211">
    <property type="term" value="C:postsynaptic membrane"/>
    <property type="evidence" value="ECO:0007669"/>
    <property type="project" value="UniProtKB-SubCell"/>
</dbReference>
<dbReference type="GO" id="GO:0045202">
    <property type="term" value="C:synapse"/>
    <property type="evidence" value="ECO:0000314"/>
    <property type="project" value="MGI"/>
</dbReference>
<dbReference type="GO" id="GO:0004971">
    <property type="term" value="F:AMPA glutamate receptor activity"/>
    <property type="evidence" value="ECO:0000250"/>
    <property type="project" value="UniProtKB"/>
</dbReference>
<dbReference type="GO" id="GO:0004970">
    <property type="term" value="F:glutamate-gated receptor activity"/>
    <property type="evidence" value="ECO:0000250"/>
    <property type="project" value="UniProtKB"/>
</dbReference>
<dbReference type="GO" id="GO:1904315">
    <property type="term" value="F:transmitter-gated monoatomic ion channel activity involved in regulation of postsynaptic membrane potential"/>
    <property type="evidence" value="ECO:0000314"/>
    <property type="project" value="SynGO"/>
</dbReference>
<dbReference type="CDD" id="cd06388">
    <property type="entry name" value="PBP1_iGluR_AMPA_GluR4"/>
    <property type="match status" value="1"/>
</dbReference>
<dbReference type="CDD" id="cd13727">
    <property type="entry name" value="PBP2_iGluR_AMPA_GluR4"/>
    <property type="match status" value="1"/>
</dbReference>
<dbReference type="FunFam" id="1.10.287.70:FF:000067">
    <property type="entry name" value="glutamate receptor 2 isoform X1"/>
    <property type="match status" value="1"/>
</dbReference>
<dbReference type="FunFam" id="1.10.287.70:FF:000099">
    <property type="entry name" value="glutamate receptor 2 isoform X1"/>
    <property type="match status" value="1"/>
</dbReference>
<dbReference type="FunFam" id="3.40.50.2300:FF:000261">
    <property type="entry name" value="glutamate receptor 4 isoform X7"/>
    <property type="match status" value="1"/>
</dbReference>
<dbReference type="FunFam" id="3.40.190.10:FF:000001">
    <property type="entry name" value="Glutamate receptor ionotropic, kainate 2"/>
    <property type="match status" value="1"/>
</dbReference>
<dbReference type="FunFam" id="3.40.190.10:FF:000666">
    <property type="entry name" value="Glutamate receptor, ionotropic, AMPA 2a"/>
    <property type="match status" value="1"/>
</dbReference>
<dbReference type="Gene3D" id="1.10.287.70">
    <property type="match status" value="2"/>
</dbReference>
<dbReference type="Gene3D" id="3.40.50.2300">
    <property type="match status" value="2"/>
</dbReference>
<dbReference type="Gene3D" id="3.40.190.10">
    <property type="entry name" value="Periplasmic binding protein-like II"/>
    <property type="match status" value="2"/>
</dbReference>
<dbReference type="InterPro" id="IPR001828">
    <property type="entry name" value="ANF_lig-bd_rcpt"/>
</dbReference>
<dbReference type="InterPro" id="IPR019594">
    <property type="entry name" value="Glu/Gly-bd"/>
</dbReference>
<dbReference type="InterPro" id="IPR001508">
    <property type="entry name" value="Iono_Glu_rcpt_met"/>
</dbReference>
<dbReference type="InterPro" id="IPR015683">
    <property type="entry name" value="Ionotropic_Glu_rcpt"/>
</dbReference>
<dbReference type="InterPro" id="IPR001320">
    <property type="entry name" value="Iontro_rcpt_C"/>
</dbReference>
<dbReference type="InterPro" id="IPR028082">
    <property type="entry name" value="Peripla_BP_I"/>
</dbReference>
<dbReference type="PANTHER" id="PTHR18966">
    <property type="entry name" value="IONOTROPIC GLUTAMATE RECEPTOR"/>
    <property type="match status" value="1"/>
</dbReference>
<dbReference type="Pfam" id="PF01094">
    <property type="entry name" value="ANF_receptor"/>
    <property type="match status" value="1"/>
</dbReference>
<dbReference type="Pfam" id="PF00060">
    <property type="entry name" value="Lig_chan"/>
    <property type="match status" value="1"/>
</dbReference>
<dbReference type="Pfam" id="PF10613">
    <property type="entry name" value="Lig_chan-Glu_bd"/>
    <property type="match status" value="1"/>
</dbReference>
<dbReference type="PRINTS" id="PR00177">
    <property type="entry name" value="NMDARECEPTOR"/>
</dbReference>
<dbReference type="SMART" id="SM00918">
    <property type="entry name" value="Lig_chan-Glu_bd"/>
    <property type="match status" value="1"/>
</dbReference>
<dbReference type="SMART" id="SM00079">
    <property type="entry name" value="PBPe"/>
    <property type="match status" value="1"/>
</dbReference>
<dbReference type="SUPFAM" id="SSF53822">
    <property type="entry name" value="Periplasmic binding protein-like I"/>
    <property type="match status" value="1"/>
</dbReference>
<dbReference type="SUPFAM" id="SSF53850">
    <property type="entry name" value="Periplasmic binding protein-like II"/>
    <property type="match status" value="1"/>
</dbReference>
<dbReference type="SUPFAM" id="SSF81324">
    <property type="entry name" value="Voltage-gated potassium channels"/>
    <property type="match status" value="1"/>
</dbReference>
<sequence length="902" mass="100847">MRIICRQIVLLFSGFWGLAMGAFPSSVQIGGLFIRNTDQEYTAFRLAIFLHNTSPNASEAPFNLVPHVDNIETANSFAVTNAFCSQYSRGVFAIFGLYDKRSVHTLTSFCSALHISLITPSFPTEGESQFVLQLRPSLRGALLSLLDHYEWNCFVFLYDTDRGYSILQAIMEKAGQNGWHVSAICVENFNDVSYRQLLEELDRRQEKKFVIDCEIERLQNILEQIVSVGKHVKGYHYIIANLGFKDISLERFIHGGANVTGFQLVDFNTPMVTKLMDRWKKLDQREYPGSETPPKYTSALTYDGVLVMAETFRSLRRQKIDISRRGNAGDCLANPAAPWGQGIDMERTLKQVRIQGLTGNVQFDHYGRRVNYTMDVFELKSTGPRKVGYWNDMDKLVLIQDAPTLGNDTAAIENRTVVVTTIMESPYVMYKKNHEMFEGNDKYEGYCVDLASEIAKHIGIKYKIAIVPDGKYGARDADTKIWNGMVGELVYGKAEIAIAPLTITLVREEVIDFSKPFMSLGISIMIKKPQKSKPGVFSFLDPLAYEIWMCIVFAYIGVSVVLFLVSRFSPYEWHTEEPEDGKEGPSDQPPNEFGIFNSLWFSLGAFMQQGCDISPRSLSGRIVGGVWWFFTLIIISSYTANLAAFLTVERMVSPIESAEDLAKQTEIAYGTLDSGSTKEFFRRSKIAVYEKMWTYMRSAEPSVFTRTTAEGVARVRKSKGKFAFLLESTMNEYIEQRKPCDTMKVGGNLDSKGYGVATPKGSSLRTPVNLAVLKLSEAGVLDKLKNKWWYDKGECGPKDSGSKDKTSALSLSNVAGVFYILVGGLGLAMLVALIEFCYKSRAEAKRMKLTFSEAIRNKARLSITGSVGENGRVLTPDCPKAVHTGTAIRQSSGLAVIASDLP</sequence>
<keyword id="KW-1003">Cell membrane</keyword>
<keyword id="KW-0966">Cell projection</keyword>
<keyword id="KW-1015">Disulfide bond</keyword>
<keyword id="KW-0325">Glycoprotein</keyword>
<keyword id="KW-0407">Ion channel</keyword>
<keyword id="KW-0406">Ion transport</keyword>
<keyword id="KW-1071">Ligand-gated ion channel</keyword>
<keyword id="KW-0449">Lipoprotein</keyword>
<keyword id="KW-0472">Membrane</keyword>
<keyword id="KW-0564">Palmitate</keyword>
<keyword id="KW-0597">Phosphoprotein</keyword>
<keyword id="KW-0628">Postsynaptic cell membrane</keyword>
<keyword id="KW-0675">Receptor</keyword>
<keyword id="KW-1185">Reference proteome</keyword>
<keyword id="KW-0732">Signal</keyword>
<keyword id="KW-0770">Synapse</keyword>
<keyword id="KW-0812">Transmembrane</keyword>
<keyword id="KW-1133">Transmembrane helix</keyword>
<keyword id="KW-0813">Transport</keyword>
<organism>
    <name type="scientific">Mus musculus</name>
    <name type="common">Mouse</name>
    <dbReference type="NCBI Taxonomy" id="10090"/>
    <lineage>
        <taxon>Eukaryota</taxon>
        <taxon>Metazoa</taxon>
        <taxon>Chordata</taxon>
        <taxon>Craniata</taxon>
        <taxon>Vertebrata</taxon>
        <taxon>Euteleostomi</taxon>
        <taxon>Mammalia</taxon>
        <taxon>Eutheria</taxon>
        <taxon>Euarchontoglires</taxon>
        <taxon>Glires</taxon>
        <taxon>Rodentia</taxon>
        <taxon>Myomorpha</taxon>
        <taxon>Muroidea</taxon>
        <taxon>Muridae</taxon>
        <taxon>Murinae</taxon>
        <taxon>Mus</taxon>
        <taxon>Mus</taxon>
    </lineage>
</organism>
<name>GRIA4_MOUSE</name>
<evidence type="ECO:0000250" key="1"/>
<evidence type="ECO:0000250" key="2">
    <source>
        <dbReference type="UniProtKB" id="P19493"/>
    </source>
</evidence>
<evidence type="ECO:0000250" key="3">
    <source>
        <dbReference type="UniProtKB" id="P23819"/>
    </source>
</evidence>
<evidence type="ECO:0000250" key="4">
    <source>
        <dbReference type="UniProtKB" id="P42262"/>
    </source>
</evidence>
<evidence type="ECO:0000250" key="5">
    <source>
        <dbReference type="UniProtKB" id="P48058"/>
    </source>
</evidence>
<evidence type="ECO:0000255" key="6"/>
<evidence type="ECO:0000269" key="7">
    <source>
    </source>
</evidence>
<evidence type="ECO:0000269" key="8">
    <source>
    </source>
</evidence>
<evidence type="ECO:0000305" key="9"/>
<evidence type="ECO:0000312" key="10">
    <source>
        <dbReference type="MGI" id="MGI:95811"/>
    </source>
</evidence>
<evidence type="ECO:0007744" key="11">
    <source>
    </source>
</evidence>
<gene>
    <name evidence="10" type="primary">Gria4</name>
    <name type="synonym">Glur4</name>
</gene>
<protein>
    <recommendedName>
        <fullName evidence="9">Glutamate receptor 4</fullName>
        <shortName>GluR-4</shortName>
        <shortName>GluR4</shortName>
    </recommendedName>
    <alternativeName>
        <fullName>AMPA-selective glutamate receptor 4</fullName>
    </alternativeName>
    <alternativeName>
        <fullName>GluR-D</fullName>
    </alternativeName>
    <alternativeName>
        <fullName>Glutamate receptor ionotropic, AMPA 4</fullName>
        <shortName>GluA4</shortName>
    </alternativeName>
</protein>
<comment type="function">
    <text evidence="2 4 5">Ionotropic glutamate receptor that functions as a ligand-gated cation channel, gated by L-glutamate and glutamatergic agonists such as alpha-amino-3-hydroxy-5-methyl-4-isoxazolepropionic acid (AMPA), quisqualic acid, and kainic acid (By similarity). L-glutamate acts as an excitatory neurotransmitter at many synapses in the central nervous system and plays an important role in fast excitatory synaptic transmission (By similarity). Binding of the excitatory neurotransmitter L-glutamate induces a conformation change, leading to the opening of the cation channel, and thereby converts the chemical signal to an electrical impulse upon entry of monovalent and divalent cations such as sodium and calcium. The receptor then desensitizes rapidly and enters a transient inactive state, characterized by the presence of bound agonist (By similarity). In the presence of CACNG8, shows resensitization which is characterized by a delayed accumulation of current flux upon continued application of L-glutamate (By similarity).</text>
</comment>
<comment type="catalytic activity">
    <reaction evidence="2">
        <text>Ca(2+)(in) = Ca(2+)(out)</text>
        <dbReference type="Rhea" id="RHEA:29671"/>
        <dbReference type="ChEBI" id="CHEBI:29108"/>
    </reaction>
</comment>
<comment type="catalytic activity">
    <reaction evidence="2">
        <text>Na(+)(in) = Na(+)(out)</text>
        <dbReference type="Rhea" id="RHEA:34963"/>
        <dbReference type="ChEBI" id="CHEBI:29101"/>
    </reaction>
</comment>
<comment type="catalytic activity">
    <reaction evidence="2">
        <text>Mg(2+)(in) = Mg(2+)(out)</text>
        <dbReference type="Rhea" id="RHEA:29827"/>
        <dbReference type="ChEBI" id="CHEBI:18420"/>
    </reaction>
</comment>
<comment type="subunit">
    <text evidence="2 8">Homotetramer or heterotetramer of pore-forming glutamate receptor subunits. Tetramers may be formed by the dimerization of dimers. Interacts with EPB41L1 via its C-terminus. Isoform 3 interacts with PICK1. Found in a complex with GRIA1, GRIA2, GRIA3, CNIH2, CNIH3, CACNG2, CACNG3, CACNG4, CACNG5, CACNG7 and CACNG8. Interacts with CACNG5 and PRKCG (By similarity). Found in a complex with GRIA1, GRIA2, GRIA3, DLG4, CACNG8 and CNIH2 (PubMed:33981040).</text>
</comment>
<comment type="interaction">
    <interactant intactId="EBI-445497">
        <id>Q9Z2W8</id>
    </interactant>
    <interactant intactId="EBI-26472905">
        <id>O70340</id>
        <label>Nptx2</label>
    </interactant>
    <organismsDiffer>false</organismsDiffer>
    <experiments>2</experiments>
</comment>
<comment type="subcellular location">
    <subcellularLocation>
        <location evidence="2">Cell membrane</location>
        <topology evidence="2">Multi-pass membrane protein</topology>
    </subcellularLocation>
    <subcellularLocation>
        <location evidence="2">Postsynaptic cell membrane</location>
        <topology evidence="2">Multi-pass membrane protein</topology>
    </subcellularLocation>
    <subcellularLocation>
        <location evidence="2">Cell projection</location>
        <location evidence="2">Dendrite</location>
    </subcellularLocation>
    <subcellularLocation>
        <location evidence="4">Postsynaptic cell membrane</location>
        <topology evidence="4">Multi-pass membrane protein</topology>
    </subcellularLocation>
</comment>
<comment type="domain">
    <text evidence="4">The M4 transmembrane segment mediates tetramerization and is required for cell surface expression.</text>
</comment>
<comment type="PTM">
    <text evidence="3">Palmitoylated. Depalmitoylated upon L-glutamate stimulation. ZDHHC3/GODZ specifically palmitoylates Cys-611, which leads to Golgi retention and decreased cell surface expression. In contrast, Cys-837 palmitoylation does not affect cell surface expression but regulates stimulation-dependent endocytosis.</text>
</comment>
<comment type="PTM">
    <text evidence="2">Phosphorylated at Ser-862 by PRKCG; phosphorylation increases plasma membrane-associated GRI4 expression.</text>
</comment>
<comment type="miscellaneous">
    <text evidence="2">The postsynaptic actions of L-glutamate are mediated by a variety of receptors that are named according to their selective agonists. This receptor binds AMPA (quisqualate) &gt; L-glutamate &gt; kainate.</text>
</comment>
<comment type="similarity">
    <text evidence="9">Belongs to the glutamate-gated ion channel (TC 1.A.10.1) family. GRIA4 subfamily.</text>
</comment>
<proteinExistence type="evidence at protein level"/>
<reference key="1">
    <citation type="submission" date="1999-01" db="EMBL/GenBank/DDBJ databases">
        <title>Mouse glutamate receptor channel alpha4 subunit.</title>
        <authorList>
            <person name="Sakimura K."/>
            <person name="Ikeno K."/>
        </authorList>
    </citation>
    <scope>NUCLEOTIDE SEQUENCE [MRNA]</scope>
    <source>
        <strain>C57BL/6J</strain>
    </source>
</reference>
<reference key="2">
    <citation type="submission" date="2002-01" db="EMBL/GenBank/DDBJ databases">
        <title>Expression of AMPA-selective glutamate receptors in mouse spinal cord.</title>
        <authorList>
            <person name="Doi Y."/>
            <person name="Nishizawa M."/>
            <person name="Minami T."/>
            <person name="Ito S."/>
        </authorList>
    </citation>
    <scope>NUCLEOTIDE SEQUENCE [MRNA]</scope>
    <source>
        <strain>ddY</strain>
        <tissue>Spinal cord</tissue>
    </source>
</reference>
<reference key="3">
    <citation type="journal article" date="2004" name="Genome Res.">
        <title>The status, quality, and expansion of the NIH full-length cDNA project: the Mammalian Gene Collection (MGC).</title>
        <authorList>
            <consortium name="The MGC Project Team"/>
        </authorList>
    </citation>
    <scope>NUCLEOTIDE SEQUENCE [LARGE SCALE MRNA]</scope>
    <source>
        <strain>C57BL/6J</strain>
        <tissue>Brain</tissue>
    </source>
</reference>
<reference key="4">
    <citation type="journal article" date="2005" name="Neuron">
        <title>Differential regulation of AMPA receptor subunit trafficking by palmitoylation of two distinct sites.</title>
        <authorList>
            <person name="Hayashi T."/>
            <person name="Rumbaugh G."/>
            <person name="Huganir R.L."/>
        </authorList>
    </citation>
    <scope>PALMITOYLATION AT CYS-837</scope>
</reference>
<reference key="5">
    <citation type="journal article" date="2010" name="Cell">
        <title>A tissue-specific atlas of mouse protein phosphorylation and expression.</title>
        <authorList>
            <person name="Huttlin E.L."/>
            <person name="Jedrychowski M.P."/>
            <person name="Elias J.E."/>
            <person name="Goswami T."/>
            <person name="Rad R."/>
            <person name="Beausoleil S.A."/>
            <person name="Villen J."/>
            <person name="Haas W."/>
            <person name="Sowa M.E."/>
            <person name="Gygi S.P."/>
        </authorList>
    </citation>
    <scope>PHOSPHORYLATION [LARGE SCALE ANALYSIS] AT SER-862</scope>
    <scope>IDENTIFICATION BY MASS SPECTROMETRY [LARGE SCALE ANALYSIS]</scope>
    <source>
        <tissue>Brain</tissue>
    </source>
</reference>
<reference key="6">
    <citation type="journal article" date="2021" name="Nature">
        <title>Hippocampal AMPA receptor assemblies and mechanism of allosteric inhibition.</title>
        <authorList>
            <person name="Yu J."/>
            <person name="Rao P."/>
            <person name="Clark S."/>
            <person name="Mitra J."/>
            <person name="Ha T."/>
            <person name="Gouaux E."/>
        </authorList>
    </citation>
    <scope>SUBUNIT</scope>
</reference>
<accession>Q9Z2W8</accession>
<accession>Q6P9M7</accession>